<protein>
    <recommendedName>
        <fullName>Interleukin-6</fullName>
        <shortName>IL-6</shortName>
    </recommendedName>
</protein>
<dbReference type="EMBL" id="M86722">
    <property type="protein sequence ID" value="AAC37333.1"/>
    <property type="molecule type" value="mRNA"/>
</dbReference>
<dbReference type="EMBL" id="M80258">
    <property type="protein sequence ID" value="AAC27127.1"/>
    <property type="molecule type" value="mRNA"/>
</dbReference>
<dbReference type="EMBL" id="AF309651">
    <property type="protein sequence ID" value="AAG27730.1"/>
    <property type="molecule type" value="mRNA"/>
</dbReference>
<dbReference type="PIR" id="I46590">
    <property type="entry name" value="I46590"/>
</dbReference>
<dbReference type="PIR" id="I46621">
    <property type="entry name" value="I46621"/>
</dbReference>
<dbReference type="RefSeq" id="NP_001239358.1">
    <property type="nucleotide sequence ID" value="NM_001252429.1"/>
</dbReference>
<dbReference type="RefSeq" id="NP_999564.1">
    <property type="nucleotide sequence ID" value="NM_214399.1"/>
</dbReference>
<dbReference type="SMR" id="P26893"/>
<dbReference type="FunCoup" id="P26893">
    <property type="interactions" value="476"/>
</dbReference>
<dbReference type="STRING" id="9823.ENSSSCP00000023819"/>
<dbReference type="PaxDb" id="9823-ENSSSCP00000023819"/>
<dbReference type="GeneID" id="399500"/>
<dbReference type="KEGG" id="ssc:399500"/>
<dbReference type="CTD" id="3569"/>
<dbReference type="eggNOG" id="ENOG502S7Q4">
    <property type="taxonomic scope" value="Eukaryota"/>
</dbReference>
<dbReference type="InParanoid" id="P26893"/>
<dbReference type="OrthoDB" id="8943569at2759"/>
<dbReference type="Proteomes" id="UP000008227">
    <property type="component" value="Unplaced"/>
</dbReference>
<dbReference type="Proteomes" id="UP000314985">
    <property type="component" value="Unplaced"/>
</dbReference>
<dbReference type="Proteomes" id="UP000694570">
    <property type="component" value="Unplaced"/>
</dbReference>
<dbReference type="Proteomes" id="UP000694571">
    <property type="component" value="Unplaced"/>
</dbReference>
<dbReference type="Proteomes" id="UP000694720">
    <property type="component" value="Unplaced"/>
</dbReference>
<dbReference type="Proteomes" id="UP000694722">
    <property type="component" value="Unplaced"/>
</dbReference>
<dbReference type="Proteomes" id="UP000694723">
    <property type="component" value="Unplaced"/>
</dbReference>
<dbReference type="Proteomes" id="UP000694724">
    <property type="component" value="Unplaced"/>
</dbReference>
<dbReference type="Proteomes" id="UP000694725">
    <property type="component" value="Unplaced"/>
</dbReference>
<dbReference type="Proteomes" id="UP000694726">
    <property type="component" value="Unplaced"/>
</dbReference>
<dbReference type="Proteomes" id="UP000694727">
    <property type="component" value="Unplaced"/>
</dbReference>
<dbReference type="Proteomes" id="UP000694728">
    <property type="component" value="Unplaced"/>
</dbReference>
<dbReference type="GO" id="GO:0005615">
    <property type="term" value="C:extracellular space"/>
    <property type="evidence" value="ECO:0000318"/>
    <property type="project" value="GO_Central"/>
</dbReference>
<dbReference type="GO" id="GO:0005896">
    <property type="term" value="C:interleukin-6 receptor complex"/>
    <property type="evidence" value="ECO:0000318"/>
    <property type="project" value="GO_Central"/>
</dbReference>
<dbReference type="GO" id="GO:0005125">
    <property type="term" value="F:cytokine activity"/>
    <property type="evidence" value="ECO:0000318"/>
    <property type="project" value="GO_Central"/>
</dbReference>
<dbReference type="GO" id="GO:0008083">
    <property type="term" value="F:growth factor activity"/>
    <property type="evidence" value="ECO:0000318"/>
    <property type="project" value="GO_Central"/>
</dbReference>
<dbReference type="GO" id="GO:0005138">
    <property type="term" value="F:interleukin-6 receptor binding"/>
    <property type="evidence" value="ECO:0007669"/>
    <property type="project" value="InterPro"/>
</dbReference>
<dbReference type="GO" id="GO:0006953">
    <property type="term" value="P:acute-phase response"/>
    <property type="evidence" value="ECO:0007669"/>
    <property type="project" value="UniProtKB-KW"/>
</dbReference>
<dbReference type="GO" id="GO:0042593">
    <property type="term" value="P:glucose homeostasis"/>
    <property type="evidence" value="ECO:0000250"/>
    <property type="project" value="UniProtKB"/>
</dbReference>
<dbReference type="GO" id="GO:0072574">
    <property type="term" value="P:hepatocyte proliferation"/>
    <property type="evidence" value="ECO:0000250"/>
    <property type="project" value="UniProtKB"/>
</dbReference>
<dbReference type="GO" id="GO:0070102">
    <property type="term" value="P:interleukin-6-mediated signaling pathway"/>
    <property type="evidence" value="ECO:0000250"/>
    <property type="project" value="UniProtKB"/>
</dbReference>
<dbReference type="GO" id="GO:0097421">
    <property type="term" value="P:liver regeneration"/>
    <property type="evidence" value="ECO:0000250"/>
    <property type="project" value="UniProtKB"/>
</dbReference>
<dbReference type="GO" id="GO:0008284">
    <property type="term" value="P:positive regulation of cell population proliferation"/>
    <property type="evidence" value="ECO:0000318"/>
    <property type="project" value="GO_Central"/>
</dbReference>
<dbReference type="GO" id="GO:2000866">
    <property type="term" value="P:positive regulation of estradiol secretion"/>
    <property type="evidence" value="ECO:0000314"/>
    <property type="project" value="CACAO"/>
</dbReference>
<dbReference type="GO" id="GO:0046427">
    <property type="term" value="P:positive regulation of receptor signaling pathway via JAK-STAT"/>
    <property type="evidence" value="ECO:0000318"/>
    <property type="project" value="GO_Central"/>
</dbReference>
<dbReference type="GO" id="GO:1904894">
    <property type="term" value="P:positive regulation of receptor signaling pathway via STAT"/>
    <property type="evidence" value="ECO:0000250"/>
    <property type="project" value="UniProtKB"/>
</dbReference>
<dbReference type="GO" id="GO:0070092">
    <property type="term" value="P:regulation of glucagon secretion"/>
    <property type="evidence" value="ECO:0000250"/>
    <property type="project" value="UniProtKB"/>
</dbReference>
<dbReference type="GO" id="GO:0050796">
    <property type="term" value="P:regulation of insulin secretion"/>
    <property type="evidence" value="ECO:0000250"/>
    <property type="project" value="UniProtKB"/>
</dbReference>
<dbReference type="GO" id="GO:0014823">
    <property type="term" value="P:response to activity"/>
    <property type="evidence" value="ECO:0000250"/>
    <property type="project" value="UniProtKB"/>
</dbReference>
<dbReference type="GO" id="GO:0072540">
    <property type="term" value="P:T-helper 17 cell lineage commitment"/>
    <property type="evidence" value="ECO:0000250"/>
    <property type="project" value="UniProtKB"/>
</dbReference>
<dbReference type="GO" id="GO:0010573">
    <property type="term" value="P:vascular endothelial growth factor production"/>
    <property type="evidence" value="ECO:0000250"/>
    <property type="project" value="UniProtKB"/>
</dbReference>
<dbReference type="FunFam" id="1.20.1250.10:FF:000006">
    <property type="entry name" value="Interleukin-6"/>
    <property type="match status" value="1"/>
</dbReference>
<dbReference type="Gene3D" id="1.20.1250.10">
    <property type="match status" value="1"/>
</dbReference>
<dbReference type="InterPro" id="IPR009079">
    <property type="entry name" value="4_helix_cytokine-like_core"/>
</dbReference>
<dbReference type="InterPro" id="IPR003574">
    <property type="entry name" value="IL-6-like"/>
</dbReference>
<dbReference type="InterPro" id="IPR030474">
    <property type="entry name" value="IL-6/GCSF/MGF"/>
</dbReference>
<dbReference type="InterPro" id="IPR030473">
    <property type="entry name" value="IL6/GCSF/MGF_CS"/>
</dbReference>
<dbReference type="PANTHER" id="PTHR48494">
    <property type="entry name" value="INTERLEUKIN-6"/>
    <property type="match status" value="1"/>
</dbReference>
<dbReference type="PANTHER" id="PTHR48494:SF1">
    <property type="entry name" value="INTERLEUKIN-6"/>
    <property type="match status" value="1"/>
</dbReference>
<dbReference type="Pfam" id="PF00489">
    <property type="entry name" value="IL6"/>
    <property type="match status" value="1"/>
</dbReference>
<dbReference type="PIRSF" id="PIRSF001935">
    <property type="entry name" value="IL6_MGF_GCSF"/>
    <property type="match status" value="1"/>
</dbReference>
<dbReference type="PRINTS" id="PR00433">
    <property type="entry name" value="IL6GCSFMGF"/>
</dbReference>
<dbReference type="PRINTS" id="PR00434">
    <property type="entry name" value="INTERLEUKIN6"/>
</dbReference>
<dbReference type="SMART" id="SM00126">
    <property type="entry name" value="IL6"/>
    <property type="match status" value="1"/>
</dbReference>
<dbReference type="SUPFAM" id="SSF47266">
    <property type="entry name" value="4-helical cytokines"/>
    <property type="match status" value="1"/>
</dbReference>
<dbReference type="PROSITE" id="PS00254">
    <property type="entry name" value="INTERLEUKIN_6"/>
    <property type="match status" value="1"/>
</dbReference>
<feature type="signal peptide" evidence="1">
    <location>
        <begin position="1"/>
        <end position="29"/>
    </location>
</feature>
<feature type="chain" id="PRO_0000015591" description="Interleukin-6">
    <location>
        <begin position="30"/>
        <end position="212"/>
    </location>
</feature>
<feature type="region of interest" description="Disordered" evidence="4">
    <location>
        <begin position="156"/>
        <end position="175"/>
    </location>
</feature>
<feature type="compositionally biased region" description="Polar residues" evidence="4">
    <location>
        <begin position="163"/>
        <end position="175"/>
    </location>
</feature>
<feature type="modified residue" description="Phosphoserine" evidence="2">
    <location>
        <position position="81"/>
    </location>
</feature>
<feature type="disulfide bond" evidence="1">
    <location>
        <begin position="72"/>
        <end position="78"/>
    </location>
</feature>
<feature type="disulfide bond" evidence="1">
    <location>
        <begin position="101"/>
        <end position="111"/>
    </location>
</feature>
<feature type="sequence conflict" description="In Ref. 1; AAC37333." evidence="5" ref="1">
    <original>E</original>
    <variation>G</variation>
    <location>
        <position position="30"/>
    </location>
</feature>
<accession>P26893</accession>
<accession>Q95KN6</accession>
<gene>
    <name type="primary">IL6</name>
</gene>
<keyword id="KW-0011">Acute phase</keyword>
<keyword id="KW-0202">Cytokine</keyword>
<keyword id="KW-1015">Disulfide bond</keyword>
<keyword id="KW-0339">Growth factor</keyword>
<keyword id="KW-0597">Phosphoprotein</keyword>
<keyword id="KW-1185">Reference proteome</keyword>
<keyword id="KW-0964">Secreted</keyword>
<keyword id="KW-0732">Signal</keyword>
<name>IL6_PIG</name>
<comment type="function">
    <text evidence="2">Cytokine with a wide variety of biological functions in immunity, tissue regeneration, and metabolism. Binds to IL6R, then the complex associates to the signaling subunit IL6ST/gp130 to trigger the intracellular IL6-signaling pathway. The interaction with the membrane-bound IL6R and IL6ST stimulates 'classic signaling', whereas the binding of IL6 and soluble IL6R to IL6ST stimulates 'trans-signaling'. Alternatively, 'cluster signaling' occurs when membrane-bound IL6:IL6R complexes on transmitter cells activate IL6ST receptors on neighboring receiver cells.</text>
</comment>
<comment type="function">
    <text evidence="2 3">IL6 is a potent inducer of the acute phase response. Rapid production of IL6 contributes to host defense during infection and tissue injury, but excessive IL6 synthesis is involved in disease pathology. In the innate immune response, is synthesized by myeloid cells, such as macrophages and dendritic cells, upon recognition of pathogens through toll-like receptors (TLRs) at the site of infection or tissue injury (By similarity). In the adaptive immune response, is required for the differentiation of B cells into immunoglobulin-secreting cells. Plays a major role in the differentiation of CD4(+) T cell subsets. Essential factor for the development of T follicular helper (Tfh) cells that are required for the induction of germinal-center formation. Required to drive naive CD4(+) T cells to the Th17 lineage. Also required for proliferation of myeloma cells and the survival of plasmablast cells (By similarity).</text>
</comment>
<comment type="function">
    <text evidence="2 3">Acts as an essential factor in bone homeostasis and on vessels directly or indirectly by induction of VEGF, resulting in increased angiogenesis activity and vascular permeability. Induces, through 'trans-signaling' and synergistically with IL1B and TNF, the production of VEGF. Involved in metabolic controls, is discharged into the bloodstream after muscle contraction increasing lipolysis and improving insulin resistance (By similarity). 'Trans-signaling' in central nervous system also regulates energy and glucose homeostasis. Mediates, through GLP-1, crosstalk between insulin-sensitive tissues, intestinal L cells and pancreatic islets to adapt to changes in insulin demand (By similarity). Also acts as a myokine (By similarity). Plays a protective role during liver injury, being required for maintenance of tissue regeneration (By similarity). Also has a pivotal role in iron metabolism by regulating HAMP/hepcidin expression upon inflammation or bacterial infection (By similarity). Through activation of IL6ST-YAP-NOTCH pathway, induces inflammation-induced epithelial regeneration (By similarity).</text>
</comment>
<comment type="subunit">
    <text evidence="2">Component of a hexamer of two molecules each of IL6, IL6R and IL6ST; first binds to IL6R to associate with the signaling subunit IL6ST. Interacts with IL6R (via the N-terminal ectodomain); this interaction may be affected by IL6R-binding with SORL1, hence decreasing IL6 cis signaling. Interacts with SORL1 (via the N-terminal ectodomain); this interaction leads to IL6 internalization and lysosomal degradation. May form a trimeric complex with the soluble SORL1 ectodomain and soluble IL6R receptor; this interaction might stabilize circulating IL6, hence promoting IL6 trans signaling.</text>
</comment>
<comment type="subcellular location">
    <subcellularLocation>
        <location evidence="2">Secreted</location>
    </subcellularLocation>
</comment>
<comment type="similarity">
    <text evidence="5">Belongs to the IL-6 superfamily.</text>
</comment>
<reference key="1">
    <citation type="journal article" date="1991" name="Cytokine">
        <title>Molecular cloning and sequence of porcine interleukin 6 cDNA and expression of mRNA in synovial fibroblasts in vitro.</title>
        <authorList>
            <person name="Richards C."/>
            <person name="Saklatvala J."/>
        </authorList>
    </citation>
    <scope>NUCLEOTIDE SEQUENCE [MRNA]</scope>
</reference>
<reference key="2">
    <citation type="journal article" date="1992" name="Mol. Reprod. Dev.">
        <title>Expression of interleukin-6 in porcine, ovine, and bovine preimplantation conceptuses.</title>
        <authorList>
            <person name="Mathialagan N."/>
            <person name="Bixby J.A."/>
            <person name="Roberts M.R."/>
        </authorList>
    </citation>
    <scope>NUCLEOTIDE SEQUENCE [MRNA]</scope>
</reference>
<reference key="3">
    <citation type="submission" date="2000-09" db="EMBL/GenBank/DDBJ databases">
        <title>Cloning and expression of interleukin 6 gene from Landrance x Meishan hybrid swine.</title>
        <authorList>
            <person name="Liu S."/>
            <person name="Meng M."/>
            <person name="Gao R."/>
        </authorList>
    </citation>
    <scope>NUCLEOTIDE SEQUENCE [MRNA]</scope>
    <source>
        <strain>Landrace X Meishan</strain>
        <tissue>Blood</tissue>
    </source>
</reference>
<proteinExistence type="evidence at transcript level"/>
<organism>
    <name type="scientific">Sus scrofa</name>
    <name type="common">Pig</name>
    <dbReference type="NCBI Taxonomy" id="9823"/>
    <lineage>
        <taxon>Eukaryota</taxon>
        <taxon>Metazoa</taxon>
        <taxon>Chordata</taxon>
        <taxon>Craniata</taxon>
        <taxon>Vertebrata</taxon>
        <taxon>Euteleostomi</taxon>
        <taxon>Mammalia</taxon>
        <taxon>Eutheria</taxon>
        <taxon>Laurasiatheria</taxon>
        <taxon>Artiodactyla</taxon>
        <taxon>Suina</taxon>
        <taxon>Suidae</taxon>
        <taxon>Sus</taxon>
    </lineage>
</organism>
<evidence type="ECO:0000250" key="1"/>
<evidence type="ECO:0000250" key="2">
    <source>
        <dbReference type="UniProtKB" id="P05231"/>
    </source>
</evidence>
<evidence type="ECO:0000250" key="3">
    <source>
        <dbReference type="UniProtKB" id="P08505"/>
    </source>
</evidence>
<evidence type="ECO:0000256" key="4">
    <source>
        <dbReference type="SAM" id="MobiDB-lite"/>
    </source>
</evidence>
<evidence type="ECO:0000305" key="5"/>
<sequence>MNSLSTSAFSPVAFSLGLLLVMATAFPTPERLEEDAKGDATSDKMLFTSPDKTEELIKYILGKISAMRKEMCEKYEKCENSKEVLAENNLNLPKMAEKDGCFQSGFNQETCLMRITTGLVEFQIYLDYLQKEYESNKGNVEAVQISTKALIQTLRQKGKNPDKATTPNPTTNAGLLDKLQSQNEWMKNTKIILILRSLEDFLQFSLRAIRIM</sequence>